<evidence type="ECO:0000255" key="1">
    <source>
        <dbReference type="HAMAP-Rule" id="MF_01347"/>
    </source>
</evidence>
<feature type="chain" id="PRO_1000214826" description="ATP synthase subunit beta">
    <location>
        <begin position="1"/>
        <end position="470"/>
    </location>
</feature>
<feature type="binding site" evidence="1">
    <location>
        <begin position="157"/>
        <end position="164"/>
    </location>
    <ligand>
        <name>ATP</name>
        <dbReference type="ChEBI" id="CHEBI:30616"/>
    </ligand>
</feature>
<comment type="function">
    <text evidence="1">Produces ATP from ADP in the presence of a proton gradient across the membrane. The catalytic sites are hosted primarily by the beta subunits.</text>
</comment>
<comment type="catalytic activity">
    <reaction evidence="1">
        <text>ATP + H2O + 4 H(+)(in) = ADP + phosphate + 5 H(+)(out)</text>
        <dbReference type="Rhea" id="RHEA:57720"/>
        <dbReference type="ChEBI" id="CHEBI:15377"/>
        <dbReference type="ChEBI" id="CHEBI:15378"/>
        <dbReference type="ChEBI" id="CHEBI:30616"/>
        <dbReference type="ChEBI" id="CHEBI:43474"/>
        <dbReference type="ChEBI" id="CHEBI:456216"/>
        <dbReference type="EC" id="7.1.2.2"/>
    </reaction>
</comment>
<comment type="subunit">
    <text evidence="1">F-type ATPases have 2 components, CF(1) - the catalytic core - and CF(0) - the membrane proton channel. CF(1) has five subunits: alpha(3), beta(3), gamma(1), delta(1), epsilon(1). CF(0) has three main subunits: a(1), b(2) and c(9-12). The alpha and beta chains form an alternating ring which encloses part of the gamma chain. CF(1) is attached to CF(0) by a central stalk formed by the gamma and epsilon chains, while a peripheral stalk is formed by the delta and b chains.</text>
</comment>
<comment type="subcellular location">
    <subcellularLocation>
        <location evidence="1">Cell inner membrane</location>
        <topology evidence="1">Peripheral membrane protein</topology>
    </subcellularLocation>
</comment>
<comment type="similarity">
    <text evidence="1">Belongs to the ATPase alpha/beta chains family.</text>
</comment>
<protein>
    <recommendedName>
        <fullName evidence="1">ATP synthase subunit beta</fullName>
        <ecNumber evidence="1">7.1.2.2</ecNumber>
    </recommendedName>
    <alternativeName>
        <fullName evidence="1">ATP synthase F1 sector subunit beta</fullName>
    </alternativeName>
    <alternativeName>
        <fullName evidence="1">F-ATPase subunit beta</fullName>
    </alternativeName>
</protein>
<gene>
    <name evidence="1" type="primary">atpD</name>
    <name type="ordered locus">GM21_4035</name>
</gene>
<keyword id="KW-0066">ATP synthesis</keyword>
<keyword id="KW-0067">ATP-binding</keyword>
<keyword id="KW-0997">Cell inner membrane</keyword>
<keyword id="KW-1003">Cell membrane</keyword>
<keyword id="KW-0139">CF(1)</keyword>
<keyword id="KW-0375">Hydrogen ion transport</keyword>
<keyword id="KW-0406">Ion transport</keyword>
<keyword id="KW-0472">Membrane</keyword>
<keyword id="KW-0547">Nucleotide-binding</keyword>
<keyword id="KW-1278">Translocase</keyword>
<keyword id="KW-0813">Transport</keyword>
<organism>
    <name type="scientific">Geobacter sp. (strain M21)</name>
    <dbReference type="NCBI Taxonomy" id="443144"/>
    <lineage>
        <taxon>Bacteria</taxon>
        <taxon>Pseudomonadati</taxon>
        <taxon>Thermodesulfobacteriota</taxon>
        <taxon>Desulfuromonadia</taxon>
        <taxon>Geobacterales</taxon>
        <taxon>Geobacteraceae</taxon>
        <taxon>Geobacter</taxon>
    </lineage>
</organism>
<dbReference type="EC" id="7.1.2.2" evidence="1"/>
<dbReference type="EMBL" id="CP001661">
    <property type="protein sequence ID" value="ACT20051.1"/>
    <property type="molecule type" value="Genomic_DNA"/>
</dbReference>
<dbReference type="SMR" id="C6E9F1"/>
<dbReference type="STRING" id="443144.GM21_4035"/>
<dbReference type="KEGG" id="gem:GM21_4035"/>
<dbReference type="eggNOG" id="COG0055">
    <property type="taxonomic scope" value="Bacteria"/>
</dbReference>
<dbReference type="HOGENOM" id="CLU_022398_0_2_7"/>
<dbReference type="OrthoDB" id="9801639at2"/>
<dbReference type="GO" id="GO:0005886">
    <property type="term" value="C:plasma membrane"/>
    <property type="evidence" value="ECO:0007669"/>
    <property type="project" value="UniProtKB-SubCell"/>
</dbReference>
<dbReference type="GO" id="GO:0045259">
    <property type="term" value="C:proton-transporting ATP synthase complex"/>
    <property type="evidence" value="ECO:0007669"/>
    <property type="project" value="UniProtKB-KW"/>
</dbReference>
<dbReference type="GO" id="GO:0005524">
    <property type="term" value="F:ATP binding"/>
    <property type="evidence" value="ECO:0007669"/>
    <property type="project" value="UniProtKB-UniRule"/>
</dbReference>
<dbReference type="GO" id="GO:0016887">
    <property type="term" value="F:ATP hydrolysis activity"/>
    <property type="evidence" value="ECO:0007669"/>
    <property type="project" value="InterPro"/>
</dbReference>
<dbReference type="GO" id="GO:0046933">
    <property type="term" value="F:proton-transporting ATP synthase activity, rotational mechanism"/>
    <property type="evidence" value="ECO:0007669"/>
    <property type="project" value="UniProtKB-UniRule"/>
</dbReference>
<dbReference type="CDD" id="cd18110">
    <property type="entry name" value="ATP-synt_F1_beta_C"/>
    <property type="match status" value="1"/>
</dbReference>
<dbReference type="CDD" id="cd18115">
    <property type="entry name" value="ATP-synt_F1_beta_N"/>
    <property type="match status" value="1"/>
</dbReference>
<dbReference type="CDD" id="cd01133">
    <property type="entry name" value="F1-ATPase_beta_CD"/>
    <property type="match status" value="1"/>
</dbReference>
<dbReference type="FunFam" id="1.10.1140.10:FF:000001">
    <property type="entry name" value="ATP synthase subunit beta"/>
    <property type="match status" value="1"/>
</dbReference>
<dbReference type="FunFam" id="2.40.10.170:FF:000005">
    <property type="entry name" value="ATP synthase subunit beta"/>
    <property type="match status" value="1"/>
</dbReference>
<dbReference type="FunFam" id="3.40.50.300:FF:000026">
    <property type="entry name" value="ATP synthase subunit beta"/>
    <property type="match status" value="1"/>
</dbReference>
<dbReference type="Gene3D" id="2.40.10.170">
    <property type="match status" value="1"/>
</dbReference>
<dbReference type="Gene3D" id="1.10.1140.10">
    <property type="entry name" value="Bovine Mitochondrial F1-atpase, Atp Synthase Beta Chain, Chain D, domain 3"/>
    <property type="match status" value="1"/>
</dbReference>
<dbReference type="Gene3D" id="3.40.50.300">
    <property type="entry name" value="P-loop containing nucleotide triphosphate hydrolases"/>
    <property type="match status" value="1"/>
</dbReference>
<dbReference type="HAMAP" id="MF_01347">
    <property type="entry name" value="ATP_synth_beta_bact"/>
    <property type="match status" value="1"/>
</dbReference>
<dbReference type="InterPro" id="IPR003593">
    <property type="entry name" value="AAA+_ATPase"/>
</dbReference>
<dbReference type="InterPro" id="IPR055190">
    <property type="entry name" value="ATP-synt_VA_C"/>
</dbReference>
<dbReference type="InterPro" id="IPR005722">
    <property type="entry name" value="ATP_synth_F1_bsu"/>
</dbReference>
<dbReference type="InterPro" id="IPR020003">
    <property type="entry name" value="ATPase_a/bsu_AS"/>
</dbReference>
<dbReference type="InterPro" id="IPR050053">
    <property type="entry name" value="ATPase_alpha/beta_chains"/>
</dbReference>
<dbReference type="InterPro" id="IPR004100">
    <property type="entry name" value="ATPase_F1/V1/A1_a/bsu_N"/>
</dbReference>
<dbReference type="InterPro" id="IPR036121">
    <property type="entry name" value="ATPase_F1/V1/A1_a/bsu_N_sf"/>
</dbReference>
<dbReference type="InterPro" id="IPR000194">
    <property type="entry name" value="ATPase_F1/V1/A1_a/bsu_nucl-bd"/>
</dbReference>
<dbReference type="InterPro" id="IPR024034">
    <property type="entry name" value="ATPase_F1/V1_b/a_C"/>
</dbReference>
<dbReference type="InterPro" id="IPR027417">
    <property type="entry name" value="P-loop_NTPase"/>
</dbReference>
<dbReference type="NCBIfam" id="TIGR01039">
    <property type="entry name" value="atpD"/>
    <property type="match status" value="1"/>
</dbReference>
<dbReference type="PANTHER" id="PTHR15184">
    <property type="entry name" value="ATP SYNTHASE"/>
    <property type="match status" value="1"/>
</dbReference>
<dbReference type="PANTHER" id="PTHR15184:SF71">
    <property type="entry name" value="ATP SYNTHASE SUBUNIT BETA, MITOCHONDRIAL"/>
    <property type="match status" value="1"/>
</dbReference>
<dbReference type="Pfam" id="PF00006">
    <property type="entry name" value="ATP-synt_ab"/>
    <property type="match status" value="1"/>
</dbReference>
<dbReference type="Pfam" id="PF02874">
    <property type="entry name" value="ATP-synt_ab_N"/>
    <property type="match status" value="1"/>
</dbReference>
<dbReference type="Pfam" id="PF22919">
    <property type="entry name" value="ATP-synt_VA_C"/>
    <property type="match status" value="1"/>
</dbReference>
<dbReference type="PIRSF" id="PIRSF039072">
    <property type="entry name" value="ATPase_subunit_beta"/>
    <property type="match status" value="1"/>
</dbReference>
<dbReference type="SMART" id="SM00382">
    <property type="entry name" value="AAA"/>
    <property type="match status" value="1"/>
</dbReference>
<dbReference type="SUPFAM" id="SSF47917">
    <property type="entry name" value="C-terminal domain of alpha and beta subunits of F1 ATP synthase"/>
    <property type="match status" value="1"/>
</dbReference>
<dbReference type="SUPFAM" id="SSF50615">
    <property type="entry name" value="N-terminal domain of alpha and beta subunits of F1 ATP synthase"/>
    <property type="match status" value="1"/>
</dbReference>
<dbReference type="SUPFAM" id="SSF52540">
    <property type="entry name" value="P-loop containing nucleoside triphosphate hydrolases"/>
    <property type="match status" value="1"/>
</dbReference>
<dbReference type="PROSITE" id="PS00152">
    <property type="entry name" value="ATPASE_ALPHA_BETA"/>
    <property type="match status" value="1"/>
</dbReference>
<proteinExistence type="inferred from homology"/>
<reference key="1">
    <citation type="submission" date="2009-07" db="EMBL/GenBank/DDBJ databases">
        <title>Complete sequence of Geobacter sp. M21.</title>
        <authorList>
            <consortium name="US DOE Joint Genome Institute"/>
            <person name="Lucas S."/>
            <person name="Copeland A."/>
            <person name="Lapidus A."/>
            <person name="Glavina del Rio T."/>
            <person name="Dalin E."/>
            <person name="Tice H."/>
            <person name="Bruce D."/>
            <person name="Goodwin L."/>
            <person name="Pitluck S."/>
            <person name="Saunders E."/>
            <person name="Brettin T."/>
            <person name="Detter J.C."/>
            <person name="Han C."/>
            <person name="Larimer F."/>
            <person name="Land M."/>
            <person name="Hauser L."/>
            <person name="Kyrpides N."/>
            <person name="Ovchinnikova G."/>
            <person name="Lovley D."/>
        </authorList>
    </citation>
    <scope>NUCLEOTIDE SEQUENCE [LARGE SCALE GENOMIC DNA]</scope>
    <source>
        <strain>M21</strain>
    </source>
</reference>
<name>ATPB_GEOSM</name>
<accession>C6E9F1</accession>
<sequence>MSQNFGKISQVIGAVIDVEFEPGKLPPIYQALRVTNPAIDDQEFNLVLEVAQHLGENAVRTIAMDSTDGLVRGQQVKDMGKQISVPVGKKTLGRILNVIGEPVDEMGPIGNEKEYGIHREAPAFVNQSTKVEAFTTGIKVVDLLAPYARGGKIGLFGGAGVGKTVLIMELINNIAKQHGGFSVFAGVGERTREGNDLWMEMKESGVLDKAALVYGQMNEPPGARARVALSALSIAEYFRDEEGQDVLLFVDNIFRFTQAGSEVSALLGRIPSAVGYQPTLATEMGELQERITSTNKGSITSVQAIYVPADDLTDPAPATAFAHLDATTVLSRQIAELGIYPAVDPLDSTSRILDPQVIGDEHYAIARQVQYVLQKYKDLQDIIAILGMDELSEEDKLVVARARKIQKFLSQPFHVAEAFTGSPGKYVELKDTIKGFSEIIAGKHDDLPEQAFYMVGTIEEAIEKAQKLAV</sequence>